<name>YSH8_CAEEL</name>
<accession>Q09949</accession>
<protein>
    <recommendedName>
        <fullName>Uncharacterized protein F12A10.8</fullName>
    </recommendedName>
</protein>
<reference key="1">
    <citation type="journal article" date="1998" name="Science">
        <title>Genome sequence of the nematode C. elegans: a platform for investigating biology.</title>
        <authorList>
            <consortium name="The C. elegans sequencing consortium"/>
        </authorList>
    </citation>
    <scope>NUCLEOTIDE SEQUENCE [LARGE SCALE GENOMIC DNA]</scope>
    <source>
        <strain>Bristol N2</strain>
    </source>
</reference>
<evidence type="ECO:0000256" key="1">
    <source>
        <dbReference type="SAM" id="MobiDB-lite"/>
    </source>
</evidence>
<sequence>MHPQREVIKFRKGRFYKNPTISSFKRIVPSNRPVAVDVNGFPQRHRRHYVQAGMFANAKSSLPSSANVSFQNSDDNLSTSRGRSASPTPIRKFSNFPRSNISKTWDFSDIGVKKDQQTRNQLPPMKRLNSEEEEEQQGKTKTTKKETIGASTVGRSVKHVLPWLKKWGSQDAESNMKPMRIERLKVSPTLDQSINRFSSRLRRIDSIRPIPLQNHTGTTIGTVEKALVAVALAKTKSEEYQKNPVFDYLIERSDWLLYREEFNDKIDYLPQDPFYSHDIVSSDFEEYEQEIEEARDPYYLEIGSEEKQAPIKASASKPRFDEANFHNEDPLNLDSQEDFFETSYLPKNADESKKHQKSMLPSFGDYTTKSDDERQKNRLVSFDTDSSVPRTSRKRNHQEALSPSKSNPDYSPFNYDLFSPPSVPKKPSSSSSNYSIW</sequence>
<gene>
    <name type="ORF">F12A10.8</name>
</gene>
<keyword id="KW-1185">Reference proteome</keyword>
<feature type="chain" id="PRO_0000065294" description="Uncharacterized protein F12A10.8">
    <location>
        <begin position="1"/>
        <end position="437"/>
    </location>
</feature>
<feature type="region of interest" description="Disordered" evidence="1">
    <location>
        <begin position="63"/>
        <end position="97"/>
    </location>
</feature>
<feature type="region of interest" description="Disordered" evidence="1">
    <location>
        <begin position="112"/>
        <end position="147"/>
    </location>
</feature>
<feature type="region of interest" description="Disordered" evidence="1">
    <location>
        <begin position="346"/>
        <end position="437"/>
    </location>
</feature>
<feature type="compositionally biased region" description="Polar residues" evidence="1">
    <location>
        <begin position="63"/>
        <end position="87"/>
    </location>
</feature>
<feature type="compositionally biased region" description="Polar residues" evidence="1">
    <location>
        <begin position="399"/>
        <end position="409"/>
    </location>
</feature>
<feature type="compositionally biased region" description="Low complexity" evidence="1">
    <location>
        <begin position="425"/>
        <end position="437"/>
    </location>
</feature>
<dbReference type="EMBL" id="FO081122">
    <property type="protein sequence ID" value="CCD69295.1"/>
    <property type="molecule type" value="Genomic_DNA"/>
</dbReference>
<dbReference type="PIR" id="T16046">
    <property type="entry name" value="T16046"/>
</dbReference>
<dbReference type="RefSeq" id="NP_495050.2">
    <property type="nucleotide sequence ID" value="NM_062649.4"/>
</dbReference>
<dbReference type="BioGRID" id="49169">
    <property type="interactions" value="1"/>
</dbReference>
<dbReference type="FunCoup" id="Q09949">
    <property type="interactions" value="1462"/>
</dbReference>
<dbReference type="PaxDb" id="6239-F12A10.8"/>
<dbReference type="EnsemblMetazoa" id="F12A10.8.1">
    <property type="protein sequence ID" value="F12A10.8.1"/>
    <property type="gene ID" value="WBGene00017397"/>
</dbReference>
<dbReference type="GeneID" id="184376"/>
<dbReference type="KEGG" id="cel:CELE_F12A10.8"/>
<dbReference type="UCSC" id="F12A10.8">
    <property type="organism name" value="c. elegans"/>
</dbReference>
<dbReference type="AGR" id="WB:WBGene00017397"/>
<dbReference type="CTD" id="184376"/>
<dbReference type="WormBase" id="F12A10.8">
    <property type="protein sequence ID" value="CE31784"/>
    <property type="gene ID" value="WBGene00017397"/>
</dbReference>
<dbReference type="eggNOG" id="ENOG502THQM">
    <property type="taxonomic scope" value="Eukaryota"/>
</dbReference>
<dbReference type="HOGENOM" id="CLU_650904_0_0_1"/>
<dbReference type="InParanoid" id="Q09949"/>
<dbReference type="OMA" id="WLIFRED"/>
<dbReference type="OrthoDB" id="5811397at2759"/>
<dbReference type="PRO" id="PR:Q09949"/>
<dbReference type="Proteomes" id="UP000001940">
    <property type="component" value="Chromosome II"/>
</dbReference>
<dbReference type="Bgee" id="WBGene00017397">
    <property type="expression patterns" value="Expressed in germ line (C elegans) and 4 other cell types or tissues"/>
</dbReference>
<proteinExistence type="predicted"/>
<organism>
    <name type="scientific">Caenorhabditis elegans</name>
    <dbReference type="NCBI Taxonomy" id="6239"/>
    <lineage>
        <taxon>Eukaryota</taxon>
        <taxon>Metazoa</taxon>
        <taxon>Ecdysozoa</taxon>
        <taxon>Nematoda</taxon>
        <taxon>Chromadorea</taxon>
        <taxon>Rhabditida</taxon>
        <taxon>Rhabditina</taxon>
        <taxon>Rhabditomorpha</taxon>
        <taxon>Rhabditoidea</taxon>
        <taxon>Rhabditidae</taxon>
        <taxon>Peloderinae</taxon>
        <taxon>Caenorhabditis</taxon>
    </lineage>
</organism>